<reference key="1">
    <citation type="journal article" date="2007" name="PLoS Genet.">
        <title>The complete genome sequence of Yersinia pseudotuberculosis IP31758, the causative agent of Far East scarlet-like fever.</title>
        <authorList>
            <person name="Eppinger M."/>
            <person name="Rosovitz M.J."/>
            <person name="Fricke W.F."/>
            <person name="Rasko D.A."/>
            <person name="Kokorina G."/>
            <person name="Fayolle C."/>
            <person name="Lindler L.E."/>
            <person name="Carniel E."/>
            <person name="Ravel J."/>
        </authorList>
    </citation>
    <scope>NUCLEOTIDE SEQUENCE [LARGE SCALE GENOMIC DNA]</scope>
    <source>
        <strain>IP 31758</strain>
    </source>
</reference>
<sequence>MTENRQLGALLAACHWIGEKGWCPATGGNMSLRLDLAHCLITESGKDKGSLAAEDFLLVETANNHVPSGRTPSAETGLHTLLYRLYPEIQAVLHTHSVNATVLSRVERSNALVLQGYEMQKSLSGQRSHLDAVVIPIFDNDQDIPALAQRVAAYADNRPLQYGFLVRGHGLYCWGNSVVEARRHLEGLEFLFQCELQRRLFDVNSNVDVKPNVDVNPNVEAK</sequence>
<feature type="chain" id="PRO_0000357127" description="Methylthioribulose-1-phosphate dehydratase">
    <location>
        <begin position="1"/>
        <end position="222"/>
    </location>
</feature>
<feature type="binding site" evidence="1">
    <location>
        <position position="94"/>
    </location>
    <ligand>
        <name>Zn(2+)</name>
        <dbReference type="ChEBI" id="CHEBI:29105"/>
    </ligand>
</feature>
<feature type="binding site" evidence="1">
    <location>
        <position position="96"/>
    </location>
    <ligand>
        <name>Zn(2+)</name>
        <dbReference type="ChEBI" id="CHEBI:29105"/>
    </ligand>
</feature>
<proteinExistence type="inferred from homology"/>
<organism>
    <name type="scientific">Yersinia pseudotuberculosis serotype O:1b (strain IP 31758)</name>
    <dbReference type="NCBI Taxonomy" id="349747"/>
    <lineage>
        <taxon>Bacteria</taxon>
        <taxon>Pseudomonadati</taxon>
        <taxon>Pseudomonadota</taxon>
        <taxon>Gammaproteobacteria</taxon>
        <taxon>Enterobacterales</taxon>
        <taxon>Yersiniaceae</taxon>
        <taxon>Yersinia</taxon>
    </lineage>
</organism>
<accession>A7FLL4</accession>
<gene>
    <name evidence="1" type="primary">mtnB</name>
    <name type="ordered locus">YpsIP31758_3182</name>
</gene>
<evidence type="ECO:0000255" key="1">
    <source>
        <dbReference type="HAMAP-Rule" id="MF_01677"/>
    </source>
</evidence>
<dbReference type="EC" id="4.2.1.109" evidence="1"/>
<dbReference type="EMBL" id="CP000720">
    <property type="protein sequence ID" value="ABS48662.1"/>
    <property type="molecule type" value="Genomic_DNA"/>
</dbReference>
<dbReference type="RefSeq" id="WP_011906393.1">
    <property type="nucleotide sequence ID" value="NC_009708.1"/>
</dbReference>
<dbReference type="SMR" id="A7FLL4"/>
<dbReference type="KEGG" id="ypi:YpsIP31758_3182"/>
<dbReference type="HOGENOM" id="CLU_006033_4_1_6"/>
<dbReference type="UniPathway" id="UPA00904">
    <property type="reaction ID" value="UER00875"/>
</dbReference>
<dbReference type="Proteomes" id="UP000002412">
    <property type="component" value="Chromosome"/>
</dbReference>
<dbReference type="GO" id="GO:0005737">
    <property type="term" value="C:cytoplasm"/>
    <property type="evidence" value="ECO:0007669"/>
    <property type="project" value="InterPro"/>
</dbReference>
<dbReference type="GO" id="GO:0046570">
    <property type="term" value="F:methylthioribulose 1-phosphate dehydratase activity"/>
    <property type="evidence" value="ECO:0007669"/>
    <property type="project" value="UniProtKB-UniRule"/>
</dbReference>
<dbReference type="GO" id="GO:0008270">
    <property type="term" value="F:zinc ion binding"/>
    <property type="evidence" value="ECO:0007669"/>
    <property type="project" value="UniProtKB-UniRule"/>
</dbReference>
<dbReference type="GO" id="GO:0019509">
    <property type="term" value="P:L-methionine salvage from methylthioadenosine"/>
    <property type="evidence" value="ECO:0007669"/>
    <property type="project" value="UniProtKB-UniRule"/>
</dbReference>
<dbReference type="GO" id="GO:0005996">
    <property type="term" value="P:monosaccharide metabolic process"/>
    <property type="evidence" value="ECO:0007669"/>
    <property type="project" value="UniProtKB-ARBA"/>
</dbReference>
<dbReference type="Gene3D" id="3.40.225.10">
    <property type="entry name" value="Class II aldolase/adducin N-terminal domain"/>
    <property type="match status" value="1"/>
</dbReference>
<dbReference type="HAMAP" id="MF_01677">
    <property type="entry name" value="Salvage_MtnB"/>
    <property type="match status" value="1"/>
</dbReference>
<dbReference type="InterPro" id="IPR001303">
    <property type="entry name" value="Aldolase_II/adducin_N"/>
</dbReference>
<dbReference type="InterPro" id="IPR036409">
    <property type="entry name" value="Aldolase_II/adducin_N_sf"/>
</dbReference>
<dbReference type="InterPro" id="IPR017714">
    <property type="entry name" value="MethylthioRu-1-P_deHdtase_MtnB"/>
</dbReference>
<dbReference type="NCBIfam" id="NF006672">
    <property type="entry name" value="PRK09220.1"/>
    <property type="match status" value="1"/>
</dbReference>
<dbReference type="NCBIfam" id="TIGR03328">
    <property type="entry name" value="salvage_mtnB"/>
    <property type="match status" value="1"/>
</dbReference>
<dbReference type="PANTHER" id="PTHR10640">
    <property type="entry name" value="METHYLTHIORIBULOSE-1-PHOSPHATE DEHYDRATASE"/>
    <property type="match status" value="1"/>
</dbReference>
<dbReference type="PANTHER" id="PTHR10640:SF7">
    <property type="entry name" value="METHYLTHIORIBULOSE-1-PHOSPHATE DEHYDRATASE"/>
    <property type="match status" value="1"/>
</dbReference>
<dbReference type="Pfam" id="PF00596">
    <property type="entry name" value="Aldolase_II"/>
    <property type="match status" value="1"/>
</dbReference>
<dbReference type="SMART" id="SM01007">
    <property type="entry name" value="Aldolase_II"/>
    <property type="match status" value="1"/>
</dbReference>
<dbReference type="SUPFAM" id="SSF53639">
    <property type="entry name" value="AraD/HMP-PK domain-like"/>
    <property type="match status" value="1"/>
</dbReference>
<comment type="function">
    <text evidence="1">Catalyzes the dehydration of methylthioribulose-1-phosphate (MTRu-1-P) into 2,3-diketo-5-methylthiopentyl-1-phosphate (DK-MTP-1-P).</text>
</comment>
<comment type="catalytic activity">
    <reaction evidence="1">
        <text>5-(methylsulfanyl)-D-ribulose 1-phosphate = 5-methylsulfanyl-2,3-dioxopentyl phosphate + H2O</text>
        <dbReference type="Rhea" id="RHEA:15549"/>
        <dbReference type="ChEBI" id="CHEBI:15377"/>
        <dbReference type="ChEBI" id="CHEBI:58548"/>
        <dbReference type="ChEBI" id="CHEBI:58828"/>
        <dbReference type="EC" id="4.2.1.109"/>
    </reaction>
</comment>
<comment type="cofactor">
    <cofactor evidence="1">
        <name>Zn(2+)</name>
        <dbReference type="ChEBI" id="CHEBI:29105"/>
    </cofactor>
    <text evidence="1">Binds 1 zinc ion per subunit.</text>
</comment>
<comment type="pathway">
    <text evidence="1">Amino-acid biosynthesis; L-methionine biosynthesis via salvage pathway; L-methionine from S-methyl-5-thio-alpha-D-ribose 1-phosphate: step 2/6.</text>
</comment>
<comment type="similarity">
    <text evidence="1">Belongs to the aldolase class II family. MtnB subfamily.</text>
</comment>
<name>MTNB_YERP3</name>
<keyword id="KW-0028">Amino-acid biosynthesis</keyword>
<keyword id="KW-0456">Lyase</keyword>
<keyword id="KW-0479">Metal-binding</keyword>
<keyword id="KW-0486">Methionine biosynthesis</keyword>
<keyword id="KW-0862">Zinc</keyword>
<protein>
    <recommendedName>
        <fullName evidence="1">Methylthioribulose-1-phosphate dehydratase</fullName>
        <shortName evidence="1">MTRu-1-P dehydratase</shortName>
        <ecNumber evidence="1">4.2.1.109</ecNumber>
    </recommendedName>
</protein>